<comment type="function">
    <text evidence="3 4 5">Catalyzes the hydrolysis of penicillin V to 6-aminopenicillanate (6-APA) (PubMed:30243389, PubMed:3026906, PubMed:9009066). Exhibits high specificity for penicillin V (PubMed:9009066). Penicillin G and other related compounds are hydrolyzed at less than 10% of the rate of penicillin V (PubMed:9009066). Among the cephalosporins, cephalosporin C is resistant to cleavage, whereas cephalosporin G is cleaved at about 1% of the rate of cleavage of penicillin V (PubMed:9009066).</text>
</comment>
<comment type="catalytic activity">
    <reaction evidence="3 5">
        <text>a penicillin + H2O = 6-aminopenicillanate + a carboxylate</text>
        <dbReference type="Rhea" id="RHEA:18693"/>
        <dbReference type="ChEBI" id="CHEBI:15377"/>
        <dbReference type="ChEBI" id="CHEBI:29067"/>
        <dbReference type="ChEBI" id="CHEBI:51356"/>
        <dbReference type="ChEBI" id="CHEBI:57869"/>
        <dbReference type="EC" id="3.5.1.11"/>
    </reaction>
    <physiologicalReaction direction="left-to-right" evidence="5">
        <dbReference type="Rhea" id="RHEA:18694"/>
    </physiologicalReaction>
</comment>
<comment type="activity regulation">
    <text evidence="5">Hydrolase activity is rapidly inhibited by lysine modifying reagents.</text>
</comment>
<comment type="biophysicochemical properties">
    <kinetics>
        <KM evidence="3">21.95 mM for penicillin V</KM>
        <Vmax evidence="3">10.22 umol/min/mg enzyme</Vmax>
        <text evidence="3">kcat is 6.38 sec(-1).</text>
    </kinetics>
    <phDependence>
        <text evidence="3">Optimum pH is 6.0 (PubMed:30243389). Is very stable at pH 6.0-7.0 (PubMed:30243389).</text>
    </phDependence>
    <temperatureDependence>
        <text evidence="3">Optimum temperature is 60 degrees Celsius (PubMed:30243389). Is very stable at 30-40 degrees Celsius (PubMed:30243389).</text>
    </temperatureDependence>
</comment>
<comment type="subunit">
    <text evidence="1 2 5">Homotetramer.</text>
</comment>
<comment type="PTM">
    <text evidence="1 2">Expressed as an inactive precursor that is cleaved autocatalytically at Gly-3/Cys-4 to generate an active enzyme (PubMed:10331865, PubMed:16508111). Processing exposes a catalytic N-terminal nucleophile residue with a free alpha amino group (PubMed:10331865).</text>
</comment>
<comment type="biotechnology">
    <text evidence="3">The triple mutant BspPVA-3 (T63S/N198Y/S110C) shows improved catalytic efficiency and conversion yields, suggesting that it could be a potential candidate for industrial production of 6-APA, a chemical compound used as an intermediate in the synthesis of beta-lactam antibiotics.</text>
</comment>
<comment type="similarity">
    <text evidence="10">Belongs to the peptidase C59 family.</text>
</comment>
<name>PAC_LYSSH</name>
<dbReference type="EC" id="3.5.1.11" evidence="3 5"/>
<dbReference type="EMBL" id="M15660">
    <property type="protein sequence ID" value="AAA22654.1"/>
    <property type="molecule type" value="Genomic_DNA"/>
</dbReference>
<dbReference type="PIR" id="A25559">
    <property type="entry name" value="A25559"/>
</dbReference>
<dbReference type="PDB" id="2IWM">
    <property type="method" value="X-ray"/>
    <property type="resolution" value="2.50 A"/>
    <property type="chains" value="A/B/C/D=1-338"/>
</dbReference>
<dbReference type="PDB" id="2PVA">
    <property type="method" value="X-ray"/>
    <property type="resolution" value="2.50 A"/>
    <property type="chains" value="A/B/C/D=4-338"/>
</dbReference>
<dbReference type="PDB" id="2QUY">
    <property type="method" value="X-ray"/>
    <property type="resolution" value="1.70 A"/>
    <property type="chains" value="A/B/C/D/E/F/G/H=4-338"/>
</dbReference>
<dbReference type="PDB" id="2Z71">
    <property type="method" value="X-ray"/>
    <property type="resolution" value="2.60 A"/>
    <property type="chains" value="A/C=4-338"/>
</dbReference>
<dbReference type="PDB" id="3MJI">
    <property type="method" value="X-ray"/>
    <property type="resolution" value="2.50 A"/>
    <property type="chains" value="A/B/C/D=1-338"/>
</dbReference>
<dbReference type="PDB" id="3PVA">
    <property type="method" value="X-ray"/>
    <property type="resolution" value="2.80 A"/>
    <property type="chains" value="A/B/C/D/E/F/G/H=4-338"/>
</dbReference>
<dbReference type="PDBsum" id="2IWM"/>
<dbReference type="PDBsum" id="2PVA"/>
<dbReference type="PDBsum" id="2QUY"/>
<dbReference type="PDBsum" id="2Z71"/>
<dbReference type="PDBsum" id="3MJI"/>
<dbReference type="PDBsum" id="3PVA"/>
<dbReference type="SMR" id="P12256"/>
<dbReference type="STRING" id="1421.A2J09_09020"/>
<dbReference type="DrugBank" id="DB01822">
    <property type="generic name" value="(4R,5R)-1,2-dithiane-4,5-diol"/>
</dbReference>
<dbReference type="DrugBank" id="DB03661">
    <property type="generic name" value="L-cysteic acid"/>
</dbReference>
<dbReference type="DrugBank" id="DB00417">
    <property type="generic name" value="Phenoxymethylpenicillin"/>
</dbReference>
<dbReference type="MEROPS" id="C59.001"/>
<dbReference type="BRENDA" id="3.5.1.11">
    <property type="organism ID" value="698"/>
</dbReference>
<dbReference type="EvolutionaryTrace" id="P12256"/>
<dbReference type="GO" id="GO:0008953">
    <property type="term" value="F:penicillin amidase activity"/>
    <property type="evidence" value="ECO:0007669"/>
    <property type="project" value="UniProtKB-EC"/>
</dbReference>
<dbReference type="GO" id="GO:0046677">
    <property type="term" value="P:response to antibiotic"/>
    <property type="evidence" value="ECO:0007669"/>
    <property type="project" value="UniProtKB-KW"/>
</dbReference>
<dbReference type="CDD" id="cd00542">
    <property type="entry name" value="Ntn_PVA"/>
    <property type="match status" value="1"/>
</dbReference>
<dbReference type="Gene3D" id="3.60.60.10">
    <property type="entry name" value="Penicillin V Acylase, Chain A"/>
    <property type="match status" value="1"/>
</dbReference>
<dbReference type="InterPro" id="IPR029132">
    <property type="entry name" value="CBAH/NAAA_C"/>
</dbReference>
<dbReference type="InterPro" id="IPR029055">
    <property type="entry name" value="Ntn_hydrolases_N"/>
</dbReference>
<dbReference type="InterPro" id="IPR052193">
    <property type="entry name" value="Peptidase_C59"/>
</dbReference>
<dbReference type="PANTHER" id="PTHR35527">
    <property type="entry name" value="CHOLOYLGLYCINE HYDROLASE"/>
    <property type="match status" value="1"/>
</dbReference>
<dbReference type="PANTHER" id="PTHR35527:SF2">
    <property type="entry name" value="HYDROLASE"/>
    <property type="match status" value="1"/>
</dbReference>
<dbReference type="Pfam" id="PF02275">
    <property type="entry name" value="CBAH"/>
    <property type="match status" value="1"/>
</dbReference>
<dbReference type="SUPFAM" id="SSF56235">
    <property type="entry name" value="N-terminal nucleophile aminohydrolases (Ntn hydrolases)"/>
    <property type="match status" value="1"/>
</dbReference>
<accession>P12256</accession>
<reference key="1">
    <citation type="journal article" date="1986" name="Gene">
        <title>Sequencing and heterologous expression of the gene encoding penicillin V amidase from Bacillus sphaericus.</title>
        <authorList>
            <person name="Olsson A."/>
            <person name="Uhlen M."/>
        </authorList>
    </citation>
    <scope>NUCLEOTIDE SEQUENCE [GENOMIC DNA]</scope>
    <scope>FUNCTION</scope>
</reference>
<reference key="2">
    <citation type="journal article" date="1997" name="Curr. Microbiol.">
        <title>Bacillus sphaericus penicillin V acylase: purification, substrate specificity, and active-site characterization.</title>
        <authorList>
            <person name="Pundle A."/>
            <person name="SivaRaman H."/>
        </authorList>
    </citation>
    <scope>FUNCTION</scope>
    <scope>CATALYTIC ACTIVITY</scope>
    <scope>ACTIVITY REGULATION</scope>
    <scope>SUBUNIT</scope>
    <source>
        <strain>NCIM 2478</strain>
    </source>
</reference>
<reference key="3">
    <citation type="journal article" date="2018" name="Enzyme Microb. Technol.">
        <title>Directed evolution of a penicillin V acylase from Bacillus sphaericus to improve its catalytic efficiency for 6-APA production.</title>
        <authorList>
            <person name="Xu G."/>
            <person name="Zhao Q."/>
            <person name="Huang B."/>
            <person name="Zhou J."/>
            <person name="Cao F."/>
        </authorList>
    </citation>
    <scope>FUNCTION</scope>
    <scope>CATALYTIC ACTIVITY</scope>
    <scope>BIOPHYSICOCHEMICAL PROPERTIES</scope>
    <scope>BIOTECHNOLOGY</scope>
    <scope>MUTAGENESIS OF THR-63; SER-110 AND ASN-198</scope>
</reference>
<reference evidence="14 18" key="4">
    <citation type="journal article" date="1999" name="Nat. Struct. Biol.">
        <title>Penicillin V acylase crystal structure reveals new Ntn-hydrolase family members.</title>
        <authorList>
            <person name="Suresh C.G."/>
            <person name="Pundle A.V."/>
            <person name="SivaRaman H."/>
            <person name="Rao K.N."/>
            <person name="Brannigan J.A."/>
            <person name="McVey C.E."/>
            <person name="Verma C.S."/>
            <person name="Dauter Z."/>
            <person name="Dodson E.J."/>
            <person name="Dodson G.G."/>
        </authorList>
    </citation>
    <scope>X-RAY CRYSTALLOGRAPHY (2.5 ANGSTROMS) OF 4-338</scope>
    <scope>PROTEIN SEQUENCE OF N-TERMINUS</scope>
    <scope>PROTEOLYTIC CLEAVAGE</scope>
    <scope>SUBUNIT</scope>
    <scope>ACTIVE SITE</scope>
</reference>
<reference evidence="13 15" key="5">
    <citation type="journal article" date="2005" name="Acta Crystallogr. F">
        <title>Cloning, preparation and preliminary crystallographic studies of penicillin V acylase autoproteolytic processing mutants.</title>
        <authorList>
            <person name="Chandra P.M."/>
            <person name="Brannigan J.A."/>
            <person name="Prabhune A."/>
            <person name="Pundle A."/>
            <person name="Turkenburg J.P."/>
            <person name="Dodson G.G."/>
            <person name="Suresh C.G."/>
        </authorList>
    </citation>
    <scope>X-RAY CRYSTALLOGRAPHY (1.70 ANGSTROMS) OF MUTANT SER-4 AND OF 4-338 OF MUTANT ALA-178</scope>
    <scope>PROTEOLYTIC CLEAVAGE</scope>
    <scope>SUBUNIT</scope>
    <scope>ACTIVE SITE</scope>
    <scope>MUTAGENESIS OF CYS-4 AND ASN-178</scope>
    <source>
        <strain>NCIMB 9370</strain>
    </source>
</reference>
<reference evidence="16" key="6">
    <citation type="submission" date="2007-08" db="PDB data bank">
        <title>Studies on the catalysis and post translational processing of penicillin V acylase.</title>
        <authorList>
            <person name="Pathak M.C."/>
            <person name="Brannigan J."/>
            <person name="Dodson G.G."/>
            <person name="Suresh C.G."/>
        </authorList>
    </citation>
    <scope>X-RAY CRYSTALLOGRAPHY (2.60 ANGSTROMS) OF 4-338 OF MUTANT GLY-4</scope>
</reference>
<reference evidence="17" key="7">
    <citation type="submission" date="2010-04" db="PDB data bank">
        <title>Activation of catalytic cysteine without a base in a Mutant Penicillin Acylase Precursor.</title>
        <authorList>
            <person name="Pathak M.C."/>
            <person name="Suresh C.G."/>
            <person name="Dodson G.G."/>
            <person name="Murshudov G.N."/>
        </authorList>
    </citation>
    <scope>X-RAY CRYSTALLOGRAPHY (2.50 ANGSTROMS) OF MUTANT SER-4</scope>
</reference>
<organism>
    <name type="scientific">Lysinibacillus sphaericus</name>
    <name type="common">Bacillus sphaericus</name>
    <dbReference type="NCBI Taxonomy" id="1421"/>
    <lineage>
        <taxon>Bacteria</taxon>
        <taxon>Bacillati</taxon>
        <taxon>Bacillota</taxon>
        <taxon>Bacilli</taxon>
        <taxon>Bacillales</taxon>
        <taxon>Bacillaceae</taxon>
        <taxon>Lysinibacillus</taxon>
    </lineage>
</organism>
<feature type="propeptide" id="PRO_0000045278" description="Removed in mature form" evidence="1 2">
    <location>
        <begin position="1"/>
        <end position="3"/>
    </location>
</feature>
<feature type="chain" id="PRO_0000045279" description="Penicillin V acylase">
    <location>
        <begin position="4"/>
        <end position="338"/>
    </location>
</feature>
<feature type="active site" description="Nucleophile" evidence="11 12">
    <location>
        <position position="4"/>
    </location>
</feature>
<feature type="mutagenesis site" description="Loss of activity towards penicillin V. The precursor cannot be processed." evidence="2">
    <original>C</original>
    <variation>A</variation>
    <variation>S</variation>
    <location>
        <position position="4"/>
    </location>
</feature>
<feature type="mutagenesis site" description="Slightly improves the specific activity. Has little impact on the substrate affinity, but exhibits 12.3-fold increase in catalytic efficiency; when associated with C-110 and Y-198." evidence="3">
    <original>T</original>
    <variation>S</variation>
    <location>
        <position position="63"/>
    </location>
</feature>
<feature type="mutagenesis site" description="Slightly improves the specific activity. Has little impact on the substrate affinity, but exhibits 12.3-fold increase in catalytic efficiency; when associated with S-63 and Y-198." evidence="3">
    <original>S</original>
    <variation>C</variation>
    <location>
        <position position="110"/>
    </location>
</feature>
<feature type="mutagenesis site" description="Loss of activity towards penicillin V. The precursor is partially processed." evidence="2">
    <original>N</original>
    <variation>A</variation>
    <location>
        <position position="178"/>
    </location>
</feature>
<feature type="mutagenesis site" description="Slightly improves the specific activity. Has little impact on the substrate affinity, but exhibits 12.3-fold increase in catalytic efficiency; when associated with S-63 and C-110." evidence="3">
    <original>N</original>
    <variation>Y</variation>
    <location>
        <position position="198"/>
    </location>
</feature>
<feature type="strand" evidence="20">
    <location>
        <begin position="5"/>
        <end position="10"/>
    </location>
</feature>
<feature type="strand" evidence="20">
    <location>
        <begin position="16"/>
        <end position="26"/>
    </location>
</feature>
<feature type="strand" evidence="20">
    <location>
        <begin position="31"/>
        <end position="35"/>
    </location>
</feature>
<feature type="strand" evidence="20">
    <location>
        <begin position="41"/>
        <end position="43"/>
    </location>
</feature>
<feature type="strand" evidence="19">
    <location>
        <begin position="45"/>
        <end position="47"/>
    </location>
</feature>
<feature type="strand" evidence="21">
    <location>
        <begin position="50"/>
        <end position="52"/>
    </location>
</feature>
<feature type="strand" evidence="20">
    <location>
        <begin position="57"/>
        <end position="62"/>
    </location>
</feature>
<feature type="strand" evidence="20">
    <location>
        <begin position="64"/>
        <end position="67"/>
    </location>
</feature>
<feature type="strand" evidence="20">
    <location>
        <begin position="69"/>
        <end position="75"/>
    </location>
</feature>
<feature type="strand" evidence="20">
    <location>
        <begin position="80"/>
        <end position="85"/>
    </location>
</feature>
<feature type="turn" evidence="20">
    <location>
        <begin position="87"/>
        <end position="89"/>
    </location>
</feature>
<feature type="strand" evidence="20">
    <location>
        <begin position="93"/>
        <end position="95"/>
    </location>
</feature>
<feature type="strand" evidence="20">
    <location>
        <begin position="101"/>
        <end position="103"/>
    </location>
</feature>
<feature type="helix" evidence="20">
    <location>
        <begin position="105"/>
        <end position="107"/>
    </location>
</feature>
<feature type="helix" evidence="20">
    <location>
        <begin position="108"/>
        <end position="115"/>
    </location>
</feature>
<feature type="helix" evidence="20">
    <location>
        <begin position="119"/>
        <end position="127"/>
    </location>
</feature>
<feature type="strand" evidence="20">
    <location>
        <begin position="129"/>
        <end position="132"/>
    </location>
</feature>
<feature type="turn" evidence="20">
    <location>
        <begin position="137"/>
        <end position="139"/>
    </location>
</feature>
<feature type="strand" evidence="20">
    <location>
        <begin position="145"/>
        <end position="150"/>
    </location>
</feature>
<feature type="strand" evidence="20">
    <location>
        <begin position="156"/>
        <end position="162"/>
    </location>
</feature>
<feature type="strand" evidence="20">
    <location>
        <begin position="165"/>
        <end position="169"/>
    </location>
</feature>
<feature type="strand" evidence="20">
    <location>
        <begin position="174"/>
        <end position="176"/>
    </location>
</feature>
<feature type="strand" evidence="20">
    <location>
        <begin position="178"/>
        <end position="180"/>
    </location>
</feature>
<feature type="helix" evidence="20">
    <location>
        <begin position="182"/>
        <end position="188"/>
    </location>
</feature>
<feature type="helix" evidence="20">
    <location>
        <begin position="189"/>
        <end position="192"/>
    </location>
</feature>
<feature type="strand" evidence="20">
    <location>
        <begin position="203"/>
        <end position="205"/>
    </location>
</feature>
<feature type="strand" evidence="20">
    <location>
        <begin position="208"/>
        <end position="210"/>
    </location>
</feature>
<feature type="strand" evidence="20">
    <location>
        <begin position="213"/>
        <end position="215"/>
    </location>
</feature>
<feature type="helix" evidence="20">
    <location>
        <begin position="217"/>
        <end position="219"/>
    </location>
</feature>
<feature type="helix" evidence="20">
    <location>
        <begin position="228"/>
        <end position="241"/>
    </location>
</feature>
<feature type="helix" evidence="20">
    <location>
        <begin position="248"/>
        <end position="260"/>
    </location>
</feature>
<feature type="strand" evidence="20">
    <location>
        <begin position="268"/>
        <end position="270"/>
    </location>
</feature>
<feature type="strand" evidence="20">
    <location>
        <begin position="278"/>
        <end position="286"/>
    </location>
</feature>
<feature type="turn" evidence="20">
    <location>
        <begin position="287"/>
        <end position="290"/>
    </location>
</feature>
<feature type="strand" evidence="20">
    <location>
        <begin position="291"/>
        <end position="296"/>
    </location>
</feature>
<feature type="strand" evidence="20">
    <location>
        <begin position="299"/>
        <end position="307"/>
    </location>
</feature>
<feature type="strand" evidence="20">
    <location>
        <begin position="318"/>
        <end position="321"/>
    </location>
</feature>
<feature type="strand" evidence="20">
    <location>
        <begin position="329"/>
        <end position="331"/>
    </location>
</feature>
<evidence type="ECO:0000269" key="1">
    <source>
    </source>
</evidence>
<evidence type="ECO:0000269" key="2">
    <source>
    </source>
</evidence>
<evidence type="ECO:0000269" key="3">
    <source>
    </source>
</evidence>
<evidence type="ECO:0000269" key="4">
    <source>
    </source>
</evidence>
<evidence type="ECO:0000269" key="5">
    <source>
    </source>
</evidence>
<evidence type="ECO:0000303" key="6">
    <source>
    </source>
</evidence>
<evidence type="ECO:0000303" key="7">
    <source>
    </source>
</evidence>
<evidence type="ECO:0000303" key="8">
    <source>
    </source>
</evidence>
<evidence type="ECO:0000303" key="9">
    <source>
    </source>
</evidence>
<evidence type="ECO:0000305" key="10"/>
<evidence type="ECO:0000305" key="11">
    <source>
    </source>
</evidence>
<evidence type="ECO:0000305" key="12">
    <source>
    </source>
</evidence>
<evidence type="ECO:0007744" key="13">
    <source>
        <dbReference type="PDB" id="2IWM"/>
    </source>
</evidence>
<evidence type="ECO:0007744" key="14">
    <source>
        <dbReference type="PDB" id="2PVA"/>
    </source>
</evidence>
<evidence type="ECO:0007744" key="15">
    <source>
        <dbReference type="PDB" id="2QUY"/>
    </source>
</evidence>
<evidence type="ECO:0007744" key="16">
    <source>
        <dbReference type="PDB" id="2Z71"/>
    </source>
</evidence>
<evidence type="ECO:0007744" key="17">
    <source>
        <dbReference type="PDB" id="3MJI"/>
    </source>
</evidence>
<evidence type="ECO:0007744" key="18">
    <source>
        <dbReference type="PDB" id="3PVA"/>
    </source>
</evidence>
<evidence type="ECO:0007829" key="19">
    <source>
        <dbReference type="PDB" id="2IWM"/>
    </source>
</evidence>
<evidence type="ECO:0007829" key="20">
    <source>
        <dbReference type="PDB" id="2QUY"/>
    </source>
</evidence>
<evidence type="ECO:0007829" key="21">
    <source>
        <dbReference type="PDB" id="2Z71"/>
    </source>
</evidence>
<proteinExistence type="evidence at protein level"/>
<keyword id="KW-0002">3D-structure</keyword>
<keyword id="KW-0046">Antibiotic resistance</keyword>
<keyword id="KW-0903">Direct protein sequencing</keyword>
<keyword id="KW-0378">Hydrolase</keyword>
<keyword id="KW-0865">Zymogen</keyword>
<protein>
    <recommendedName>
        <fullName evidence="6 9">Penicillin V acylase</fullName>
        <shortName evidence="6">PVA</shortName>
        <ecNumber evidence="3 5">3.5.1.11</ecNumber>
    </recommendedName>
    <alternativeName>
        <fullName evidence="7">BspPVA</fullName>
    </alternativeName>
    <alternativeName>
        <fullName evidence="8">Penicillin V amidase</fullName>
    </alternativeName>
    <alternativeName>
        <fullName evidence="9">Penicillin amidohydrolase</fullName>
    </alternativeName>
</protein>
<sequence length="338" mass="37458">MLGCSSLSIRTTDDKSLFARTMDFTMEPDSKVIIVPRNYGIRLLEKENVVINNSYAFVGMGSTDITSPVLYDGVNEKGLMGAMLYYATFATYADEPKKGTTGINPVYVISQVLGNCVTVDDVIEKLTSYTLLNEANIILGFAPPLHYTFTDASGESIVIEPDKTGITIHRKTIGVMTNSPGYEWHQTNLRAYIGVTPNPPQDIMMGDLDLTPFGQGAGGLGLPGDFTPSARFLRVAYWKKYTEKAKNETEGVTNLFHILSSVNIPKGVVLTNEGKTDYTIYTSAMCAQSKNYYFKLYDNSRISAVSLMAENLNSQDLITFEWDRKQDIKQLNQVNVMS</sequence>